<feature type="chain" id="PRO_0000064126" description="Peptidyl-prolyl cis-trans isomerase">
    <location>
        <begin position="1"/>
        <end position="162"/>
    </location>
</feature>
<feature type="domain" description="PPIase cyclophilin-type" evidence="2">
    <location>
        <begin position="5"/>
        <end position="161"/>
    </location>
</feature>
<evidence type="ECO:0000250" key="1"/>
<evidence type="ECO:0000255" key="2">
    <source>
        <dbReference type="PROSITE-ProRule" id="PRU00156"/>
    </source>
</evidence>
<evidence type="ECO:0000305" key="3"/>
<reference key="1">
    <citation type="journal article" date="1997" name="Mol. Cell. Biol.">
        <title>Sequence-specific epigenetic effects of the maternal somatic genome on developmental rearrangements of the zygotic genome in Paramecium primaurelia.</title>
        <authorList>
            <person name="Meyer E."/>
            <person name="Butler A."/>
            <person name="Dubrana K."/>
            <person name="Duharcourt S."/>
            <person name="Caron F."/>
        </authorList>
    </citation>
    <scope>NUCLEOTIDE SEQUENCE [GENOMIC DNA]</scope>
    <source>
        <strain>156</strain>
    </source>
</reference>
<proteinExistence type="inferred from homology"/>
<comment type="function">
    <text>PPIases accelerate the folding of proteins. It catalyzes the cis-trans isomerization of proline imidic peptide bonds in oligopeptides.</text>
</comment>
<comment type="catalytic activity">
    <reaction>
        <text>[protein]-peptidylproline (omega=180) = [protein]-peptidylproline (omega=0)</text>
        <dbReference type="Rhea" id="RHEA:16237"/>
        <dbReference type="Rhea" id="RHEA-COMP:10747"/>
        <dbReference type="Rhea" id="RHEA-COMP:10748"/>
        <dbReference type="ChEBI" id="CHEBI:83833"/>
        <dbReference type="ChEBI" id="CHEBI:83834"/>
        <dbReference type="EC" id="5.2.1.8"/>
    </reaction>
</comment>
<comment type="activity regulation">
    <text evidence="1">Binds cyclosporin A (CsA). CsA mediates some of its effects via an inhibitory action on PPIase (By similarity).</text>
</comment>
<comment type="similarity">
    <text evidence="3">Belongs to the cyclophilin-type PPIase family. PPIase A subfamily.</text>
</comment>
<sequence length="162" mass="17704">MANVFFDVQFGGDAPKKIVFKLYDDVVPKTAANFRELATGSRGFGYKGSVFHRVITDFMAQGGDFTNFNGTGGKSIYGEKFADENFKLKHTKPALLSMANAGPNTNGSQFFITFVPCPWLDGKHVVFGEVVDGFDTLELFKKNSSQQGKPKTTIKIVDSGVV</sequence>
<organism>
    <name type="scientific">Paramecium primaurelia</name>
    <dbReference type="NCBI Taxonomy" id="5886"/>
    <lineage>
        <taxon>Eukaryota</taxon>
        <taxon>Sar</taxon>
        <taxon>Alveolata</taxon>
        <taxon>Ciliophora</taxon>
        <taxon>Intramacronucleata</taxon>
        <taxon>Oligohymenophorea</taxon>
        <taxon>Peniculida</taxon>
        <taxon>Parameciidae</taxon>
        <taxon>Paramecium</taxon>
    </lineage>
</organism>
<dbReference type="EC" id="5.2.1.8"/>
<dbReference type="EMBL" id="Y13117">
    <property type="protein sequence ID" value="CAA73578.1"/>
    <property type="molecule type" value="Genomic_DNA"/>
</dbReference>
<dbReference type="SMR" id="O00845"/>
<dbReference type="GO" id="GO:0005737">
    <property type="term" value="C:cytoplasm"/>
    <property type="evidence" value="ECO:0007669"/>
    <property type="project" value="TreeGrafter"/>
</dbReference>
<dbReference type="GO" id="GO:0016018">
    <property type="term" value="F:cyclosporin A binding"/>
    <property type="evidence" value="ECO:0007669"/>
    <property type="project" value="TreeGrafter"/>
</dbReference>
<dbReference type="GO" id="GO:0003755">
    <property type="term" value="F:peptidyl-prolyl cis-trans isomerase activity"/>
    <property type="evidence" value="ECO:0007669"/>
    <property type="project" value="UniProtKB-KW"/>
</dbReference>
<dbReference type="GO" id="GO:0006457">
    <property type="term" value="P:protein folding"/>
    <property type="evidence" value="ECO:0007669"/>
    <property type="project" value="InterPro"/>
</dbReference>
<dbReference type="CDD" id="cd01926">
    <property type="entry name" value="cyclophilin_ABH_like"/>
    <property type="match status" value="1"/>
</dbReference>
<dbReference type="FunFam" id="2.40.100.10:FF:000013">
    <property type="entry name" value="Peptidyl-prolyl cis-trans isomerase"/>
    <property type="match status" value="1"/>
</dbReference>
<dbReference type="Gene3D" id="2.40.100.10">
    <property type="entry name" value="Cyclophilin-like"/>
    <property type="match status" value="1"/>
</dbReference>
<dbReference type="InterPro" id="IPR029000">
    <property type="entry name" value="Cyclophilin-like_dom_sf"/>
</dbReference>
<dbReference type="InterPro" id="IPR024936">
    <property type="entry name" value="Cyclophilin-type_PPIase"/>
</dbReference>
<dbReference type="InterPro" id="IPR020892">
    <property type="entry name" value="Cyclophilin-type_PPIase_CS"/>
</dbReference>
<dbReference type="InterPro" id="IPR002130">
    <property type="entry name" value="Cyclophilin-type_PPIase_dom"/>
</dbReference>
<dbReference type="PANTHER" id="PTHR11071">
    <property type="entry name" value="PEPTIDYL-PROLYL CIS-TRANS ISOMERASE"/>
    <property type="match status" value="1"/>
</dbReference>
<dbReference type="PANTHER" id="PTHR11071:SF561">
    <property type="entry name" value="PEPTIDYL-PROLYL CIS-TRANS ISOMERASE D-RELATED"/>
    <property type="match status" value="1"/>
</dbReference>
<dbReference type="Pfam" id="PF00160">
    <property type="entry name" value="Pro_isomerase"/>
    <property type="match status" value="1"/>
</dbReference>
<dbReference type="PIRSF" id="PIRSF001467">
    <property type="entry name" value="Peptidylpro_ismrse"/>
    <property type="match status" value="1"/>
</dbReference>
<dbReference type="PRINTS" id="PR00153">
    <property type="entry name" value="CSAPPISMRASE"/>
</dbReference>
<dbReference type="SUPFAM" id="SSF50891">
    <property type="entry name" value="Cyclophilin-like"/>
    <property type="match status" value="1"/>
</dbReference>
<dbReference type="PROSITE" id="PS00170">
    <property type="entry name" value="CSA_PPIASE_1"/>
    <property type="match status" value="1"/>
</dbReference>
<dbReference type="PROSITE" id="PS50072">
    <property type="entry name" value="CSA_PPIASE_2"/>
    <property type="match status" value="1"/>
</dbReference>
<keyword id="KW-0413">Isomerase</keyword>
<keyword id="KW-0697">Rotamase</keyword>
<name>PPIA_PARPR</name>
<protein>
    <recommendedName>
        <fullName>Peptidyl-prolyl cis-trans isomerase</fullName>
        <shortName>PPIase</shortName>
        <ecNumber>5.2.1.8</ecNumber>
    </recommendedName>
    <alternativeName>
        <fullName>Cyclophilin</fullName>
    </alternativeName>
    <alternativeName>
        <fullName>Cyclosporin A-binding protein</fullName>
    </alternativeName>
    <alternativeName>
        <fullName>Rotamase</fullName>
    </alternativeName>
</protein>
<accession>O00845</accession>